<proteinExistence type="inferred from homology"/>
<evidence type="ECO:0000255" key="1">
    <source>
        <dbReference type="HAMAP-Rule" id="MF_00791"/>
    </source>
</evidence>
<reference key="1">
    <citation type="journal article" date="2003" name="Proc. Natl. Acad. Sci. U.S.A.">
        <title>The complete genome sequence of the Arabidopsis and tomato pathogen Pseudomonas syringae pv. tomato DC3000.</title>
        <authorList>
            <person name="Buell C.R."/>
            <person name="Joardar V."/>
            <person name="Lindeberg M."/>
            <person name="Selengut J."/>
            <person name="Paulsen I.T."/>
            <person name="Gwinn M.L."/>
            <person name="Dodson R.J."/>
            <person name="DeBoy R.T."/>
            <person name="Durkin A.S."/>
            <person name="Kolonay J.F."/>
            <person name="Madupu R."/>
            <person name="Daugherty S.C."/>
            <person name="Brinkac L.M."/>
            <person name="Beanan M.J."/>
            <person name="Haft D.H."/>
            <person name="Nelson W.C."/>
            <person name="Davidsen T.M."/>
            <person name="Zafar N."/>
            <person name="Zhou L."/>
            <person name="Liu J."/>
            <person name="Yuan Q."/>
            <person name="Khouri H.M."/>
            <person name="Fedorova N.B."/>
            <person name="Tran B."/>
            <person name="Russell D."/>
            <person name="Berry K.J."/>
            <person name="Utterback T.R."/>
            <person name="Van Aken S.E."/>
            <person name="Feldblyum T.V."/>
            <person name="D'Ascenzo M."/>
            <person name="Deng W.-L."/>
            <person name="Ramos A.R."/>
            <person name="Alfano J.R."/>
            <person name="Cartinhour S."/>
            <person name="Chatterjee A.K."/>
            <person name="Delaney T.P."/>
            <person name="Lazarowitz S.G."/>
            <person name="Martin G.B."/>
            <person name="Schneider D.J."/>
            <person name="Tang X."/>
            <person name="Bender C.L."/>
            <person name="White O."/>
            <person name="Fraser C.M."/>
            <person name="Collmer A."/>
        </authorList>
    </citation>
    <scope>NUCLEOTIDE SEQUENCE [LARGE SCALE GENOMIC DNA]</scope>
    <source>
        <strain>ATCC BAA-871 / DC3000</strain>
    </source>
</reference>
<feature type="chain" id="PRO_0000197955" description="Protein ApaG">
    <location>
        <begin position="1"/>
        <end position="126"/>
    </location>
</feature>
<feature type="domain" description="ApaG" evidence="1">
    <location>
        <begin position="2"/>
        <end position="126"/>
    </location>
</feature>
<accession>Q88A47</accession>
<keyword id="KW-1185">Reference proteome</keyword>
<dbReference type="EMBL" id="AE016853">
    <property type="protein sequence ID" value="AAO54092.1"/>
    <property type="molecule type" value="Genomic_DNA"/>
</dbReference>
<dbReference type="RefSeq" id="NP_790397.1">
    <property type="nucleotide sequence ID" value="NC_004578.1"/>
</dbReference>
<dbReference type="RefSeq" id="WP_005768068.1">
    <property type="nucleotide sequence ID" value="NC_004578.1"/>
</dbReference>
<dbReference type="SMR" id="Q88A47"/>
<dbReference type="STRING" id="223283.PSPTO_0550"/>
<dbReference type="GeneID" id="1182160"/>
<dbReference type="KEGG" id="pst:PSPTO_0550"/>
<dbReference type="PATRIC" id="fig|223283.9.peg.560"/>
<dbReference type="eggNOG" id="COG2967">
    <property type="taxonomic scope" value="Bacteria"/>
</dbReference>
<dbReference type="HOGENOM" id="CLU_128074_0_0_6"/>
<dbReference type="OrthoDB" id="9795226at2"/>
<dbReference type="PhylomeDB" id="Q88A47"/>
<dbReference type="Proteomes" id="UP000002515">
    <property type="component" value="Chromosome"/>
</dbReference>
<dbReference type="GO" id="GO:0070987">
    <property type="term" value="P:error-free translesion synthesis"/>
    <property type="evidence" value="ECO:0007669"/>
    <property type="project" value="TreeGrafter"/>
</dbReference>
<dbReference type="Gene3D" id="2.60.40.1470">
    <property type="entry name" value="ApaG domain"/>
    <property type="match status" value="1"/>
</dbReference>
<dbReference type="HAMAP" id="MF_00791">
    <property type="entry name" value="ApaG"/>
    <property type="match status" value="1"/>
</dbReference>
<dbReference type="InterPro" id="IPR007474">
    <property type="entry name" value="ApaG_domain"/>
</dbReference>
<dbReference type="InterPro" id="IPR036767">
    <property type="entry name" value="ApaG_sf"/>
</dbReference>
<dbReference type="InterPro" id="IPR023065">
    <property type="entry name" value="Uncharacterised_ApaG"/>
</dbReference>
<dbReference type="NCBIfam" id="NF003967">
    <property type="entry name" value="PRK05461.1"/>
    <property type="match status" value="1"/>
</dbReference>
<dbReference type="PANTHER" id="PTHR14289">
    <property type="entry name" value="F-BOX ONLY PROTEIN 3"/>
    <property type="match status" value="1"/>
</dbReference>
<dbReference type="PANTHER" id="PTHR14289:SF16">
    <property type="entry name" value="POLYMERASE DELTA-INTERACTING PROTEIN 2"/>
    <property type="match status" value="1"/>
</dbReference>
<dbReference type="Pfam" id="PF04379">
    <property type="entry name" value="DUF525"/>
    <property type="match status" value="1"/>
</dbReference>
<dbReference type="SUPFAM" id="SSF110069">
    <property type="entry name" value="ApaG-like"/>
    <property type="match status" value="1"/>
</dbReference>
<dbReference type="PROSITE" id="PS51087">
    <property type="entry name" value="APAG"/>
    <property type="match status" value="1"/>
</dbReference>
<sequence length="126" mass="13949">MSDSRYKVDVSVVTRFLAEQSQPEQNRFAFAYTITVHNNGELPAKLLSRHWIITDGDGHVEEVRGEGVVGQQPLIKVGQSHTYSSGTVMTTQVGNMQGSYQMLAEDGKRFDAVIEPFRLAVPGSLH</sequence>
<name>APAG_PSESM</name>
<organism>
    <name type="scientific">Pseudomonas syringae pv. tomato (strain ATCC BAA-871 / DC3000)</name>
    <dbReference type="NCBI Taxonomy" id="223283"/>
    <lineage>
        <taxon>Bacteria</taxon>
        <taxon>Pseudomonadati</taxon>
        <taxon>Pseudomonadota</taxon>
        <taxon>Gammaproteobacteria</taxon>
        <taxon>Pseudomonadales</taxon>
        <taxon>Pseudomonadaceae</taxon>
        <taxon>Pseudomonas</taxon>
    </lineage>
</organism>
<protein>
    <recommendedName>
        <fullName evidence="1">Protein ApaG</fullName>
    </recommendedName>
</protein>
<gene>
    <name evidence="1" type="primary">apaG</name>
    <name type="ordered locus">PSPTO_0550</name>
</gene>